<organism>
    <name type="scientific">Cyanothece sp. (strain PCC 7425 / ATCC 29141)</name>
    <dbReference type="NCBI Taxonomy" id="395961"/>
    <lineage>
        <taxon>Bacteria</taxon>
        <taxon>Bacillati</taxon>
        <taxon>Cyanobacteriota</taxon>
        <taxon>Cyanophyceae</taxon>
        <taxon>Gomontiellales</taxon>
        <taxon>Cyanothecaceae</taxon>
        <taxon>Cyanothece</taxon>
    </lineage>
</organism>
<reference key="1">
    <citation type="journal article" date="2011" name="MBio">
        <title>Novel metabolic attributes of the genus Cyanothece, comprising a group of unicellular nitrogen-fixing Cyanobacteria.</title>
        <authorList>
            <person name="Bandyopadhyay A."/>
            <person name="Elvitigala T."/>
            <person name="Welsh E."/>
            <person name="Stockel J."/>
            <person name="Liberton M."/>
            <person name="Min H."/>
            <person name="Sherman L.A."/>
            <person name="Pakrasi H.B."/>
        </authorList>
    </citation>
    <scope>NUCLEOTIDE SEQUENCE [LARGE SCALE GENOMIC DNA]</scope>
    <source>
        <strain>PCC 7425 / ATCC 29141</strain>
    </source>
</reference>
<sequence>MSNLEHEAERVEMAAATTEIRQRVLELRQLVQRASYAYYVLDAPILEDVVYDQLYRELQDLETQYPELLTPDSPTQRVGEQPATQFVSVQHRIPLYSLENAFAVADMQAWQDRWQRQGQAIGEQSATLRSPEYVCELKIDGSALALTYENGVLVRGATRGDGVYGEDITANVRTIRSIPLRLDWPDPPPIVEVRGEAFLPLDVFHRLNQEREQAGESLFANPRNAAAGTLRQLDARIVAKRRLDFFAYTLHLPLASARSATQPAAAQQLDLLAVAQSDPAVAAQQLDLSSASQAESVTTHLPQTQWQSLELLQQIGFRVNPHRQLCPTLADVRQYYDHWNHGRLDLPYMTDGVVVKLNSLRLQEHLGFTQKFPRWAIAWKYEPEQAVTEVLNISVNVGRTGALTPVAELRPVQLAGTTVSRATLHNRDRLAELDLHIGDKVVIHKAGEIIPEILQVFPELRPADARPYQLPTHCPECGQPVVQPVDEAVTRCLNVSCPAIVRGAIVHWVGRDAMDIDGVGEKLVRQLVDRGLVNSVADLYRLTVAQLLTLERMGNKLAEKVVAAIAKSQSRPWSRVLYGLGIRHVGSVNAQVLTTAFPSVERLMAASAEDIEAVHGIGPEIAQSIVQWFQTPANHSLIEQLSAAGVQLAQDTVAVPPSQLPQPLAGKTFVLTGTLPTLSRDEARSMIGQAGGKVTDSVSKKTDFLVVGADAGSKLDKAGQLGIPCLSESQLLELLEET</sequence>
<dbReference type="EC" id="6.5.1.2" evidence="1"/>
<dbReference type="EMBL" id="CP001344">
    <property type="protein sequence ID" value="ACL43064.1"/>
    <property type="molecule type" value="Genomic_DNA"/>
</dbReference>
<dbReference type="SMR" id="B8HV17"/>
<dbReference type="STRING" id="395961.Cyan7425_0676"/>
<dbReference type="KEGG" id="cyn:Cyan7425_0676"/>
<dbReference type="eggNOG" id="COG0272">
    <property type="taxonomic scope" value="Bacteria"/>
</dbReference>
<dbReference type="HOGENOM" id="CLU_007764_2_1_3"/>
<dbReference type="GO" id="GO:0005829">
    <property type="term" value="C:cytosol"/>
    <property type="evidence" value="ECO:0007669"/>
    <property type="project" value="TreeGrafter"/>
</dbReference>
<dbReference type="GO" id="GO:0003677">
    <property type="term" value="F:DNA binding"/>
    <property type="evidence" value="ECO:0007669"/>
    <property type="project" value="InterPro"/>
</dbReference>
<dbReference type="GO" id="GO:0003911">
    <property type="term" value="F:DNA ligase (NAD+) activity"/>
    <property type="evidence" value="ECO:0007669"/>
    <property type="project" value="UniProtKB-UniRule"/>
</dbReference>
<dbReference type="GO" id="GO:0046872">
    <property type="term" value="F:metal ion binding"/>
    <property type="evidence" value="ECO:0007669"/>
    <property type="project" value="UniProtKB-KW"/>
</dbReference>
<dbReference type="GO" id="GO:0006281">
    <property type="term" value="P:DNA repair"/>
    <property type="evidence" value="ECO:0007669"/>
    <property type="project" value="UniProtKB-KW"/>
</dbReference>
<dbReference type="GO" id="GO:0006260">
    <property type="term" value="P:DNA replication"/>
    <property type="evidence" value="ECO:0007669"/>
    <property type="project" value="UniProtKB-KW"/>
</dbReference>
<dbReference type="CDD" id="cd17748">
    <property type="entry name" value="BRCT_DNA_ligase_like"/>
    <property type="match status" value="1"/>
</dbReference>
<dbReference type="CDD" id="cd00114">
    <property type="entry name" value="LIGANc"/>
    <property type="match status" value="1"/>
</dbReference>
<dbReference type="FunFam" id="1.10.150.20:FF:000006">
    <property type="entry name" value="DNA ligase"/>
    <property type="match status" value="1"/>
</dbReference>
<dbReference type="FunFam" id="1.10.150.20:FF:000007">
    <property type="entry name" value="DNA ligase"/>
    <property type="match status" value="1"/>
</dbReference>
<dbReference type="FunFam" id="1.10.287.610:FF:000002">
    <property type="entry name" value="DNA ligase"/>
    <property type="match status" value="1"/>
</dbReference>
<dbReference type="FunFam" id="2.40.50.140:FF:000012">
    <property type="entry name" value="DNA ligase"/>
    <property type="match status" value="1"/>
</dbReference>
<dbReference type="Gene3D" id="6.20.10.30">
    <property type="match status" value="1"/>
</dbReference>
<dbReference type="Gene3D" id="1.10.150.20">
    <property type="entry name" value="5' to 3' exonuclease, C-terminal subdomain"/>
    <property type="match status" value="2"/>
</dbReference>
<dbReference type="Gene3D" id="3.40.50.10190">
    <property type="entry name" value="BRCT domain"/>
    <property type="match status" value="1"/>
</dbReference>
<dbReference type="Gene3D" id="3.30.470.30">
    <property type="entry name" value="DNA ligase/mRNA capping enzyme"/>
    <property type="match status" value="1"/>
</dbReference>
<dbReference type="Gene3D" id="1.10.287.610">
    <property type="entry name" value="Helix hairpin bin"/>
    <property type="match status" value="1"/>
</dbReference>
<dbReference type="Gene3D" id="2.40.50.140">
    <property type="entry name" value="Nucleic acid-binding proteins"/>
    <property type="match status" value="1"/>
</dbReference>
<dbReference type="HAMAP" id="MF_01588">
    <property type="entry name" value="DNA_ligase_A"/>
    <property type="match status" value="1"/>
</dbReference>
<dbReference type="InterPro" id="IPR001357">
    <property type="entry name" value="BRCT_dom"/>
</dbReference>
<dbReference type="InterPro" id="IPR036420">
    <property type="entry name" value="BRCT_dom_sf"/>
</dbReference>
<dbReference type="InterPro" id="IPR041663">
    <property type="entry name" value="DisA/LigA_HHH"/>
</dbReference>
<dbReference type="InterPro" id="IPR001679">
    <property type="entry name" value="DNA_ligase"/>
</dbReference>
<dbReference type="InterPro" id="IPR018239">
    <property type="entry name" value="DNA_ligase_AS"/>
</dbReference>
<dbReference type="InterPro" id="IPR033136">
    <property type="entry name" value="DNA_ligase_CS"/>
</dbReference>
<dbReference type="InterPro" id="IPR013839">
    <property type="entry name" value="DNAligase_adenylation"/>
</dbReference>
<dbReference type="InterPro" id="IPR013840">
    <property type="entry name" value="DNAligase_N"/>
</dbReference>
<dbReference type="InterPro" id="IPR003583">
    <property type="entry name" value="Hlx-hairpin-Hlx_DNA-bd_motif"/>
</dbReference>
<dbReference type="InterPro" id="IPR012340">
    <property type="entry name" value="NA-bd_OB-fold"/>
</dbReference>
<dbReference type="InterPro" id="IPR004150">
    <property type="entry name" value="NAD_DNA_ligase_OB"/>
</dbReference>
<dbReference type="InterPro" id="IPR010994">
    <property type="entry name" value="RuvA_2-like"/>
</dbReference>
<dbReference type="InterPro" id="IPR004149">
    <property type="entry name" value="Znf_DNAligase_C4"/>
</dbReference>
<dbReference type="NCBIfam" id="TIGR00575">
    <property type="entry name" value="dnlj"/>
    <property type="match status" value="1"/>
</dbReference>
<dbReference type="NCBIfam" id="NF005932">
    <property type="entry name" value="PRK07956.1"/>
    <property type="match status" value="1"/>
</dbReference>
<dbReference type="PANTHER" id="PTHR23389">
    <property type="entry name" value="CHROMOSOME TRANSMISSION FIDELITY FACTOR 18"/>
    <property type="match status" value="1"/>
</dbReference>
<dbReference type="PANTHER" id="PTHR23389:SF9">
    <property type="entry name" value="DNA LIGASE"/>
    <property type="match status" value="1"/>
</dbReference>
<dbReference type="Pfam" id="PF00533">
    <property type="entry name" value="BRCT"/>
    <property type="match status" value="1"/>
</dbReference>
<dbReference type="Pfam" id="PF01653">
    <property type="entry name" value="DNA_ligase_aden"/>
    <property type="match status" value="2"/>
</dbReference>
<dbReference type="Pfam" id="PF03120">
    <property type="entry name" value="DNA_ligase_OB"/>
    <property type="match status" value="1"/>
</dbReference>
<dbReference type="Pfam" id="PF03119">
    <property type="entry name" value="DNA_ligase_ZBD"/>
    <property type="match status" value="1"/>
</dbReference>
<dbReference type="Pfam" id="PF12826">
    <property type="entry name" value="HHH_2"/>
    <property type="match status" value="1"/>
</dbReference>
<dbReference type="Pfam" id="PF14520">
    <property type="entry name" value="HHH_5"/>
    <property type="match status" value="1"/>
</dbReference>
<dbReference type="Pfam" id="PF22745">
    <property type="entry name" value="Nlig-Ia"/>
    <property type="match status" value="1"/>
</dbReference>
<dbReference type="PIRSF" id="PIRSF001604">
    <property type="entry name" value="LigA"/>
    <property type="match status" value="1"/>
</dbReference>
<dbReference type="SMART" id="SM00292">
    <property type="entry name" value="BRCT"/>
    <property type="match status" value="1"/>
</dbReference>
<dbReference type="SMART" id="SM00278">
    <property type="entry name" value="HhH1"/>
    <property type="match status" value="3"/>
</dbReference>
<dbReference type="SMART" id="SM00532">
    <property type="entry name" value="LIGANc"/>
    <property type="match status" value="1"/>
</dbReference>
<dbReference type="SUPFAM" id="SSF52113">
    <property type="entry name" value="BRCT domain"/>
    <property type="match status" value="1"/>
</dbReference>
<dbReference type="SUPFAM" id="SSF56091">
    <property type="entry name" value="DNA ligase/mRNA capping enzyme, catalytic domain"/>
    <property type="match status" value="1"/>
</dbReference>
<dbReference type="SUPFAM" id="SSF50249">
    <property type="entry name" value="Nucleic acid-binding proteins"/>
    <property type="match status" value="1"/>
</dbReference>
<dbReference type="SUPFAM" id="SSF47781">
    <property type="entry name" value="RuvA domain 2-like"/>
    <property type="match status" value="1"/>
</dbReference>
<dbReference type="PROSITE" id="PS50172">
    <property type="entry name" value="BRCT"/>
    <property type="match status" value="1"/>
</dbReference>
<dbReference type="PROSITE" id="PS01055">
    <property type="entry name" value="DNA_LIGASE_N1"/>
    <property type="match status" value="1"/>
</dbReference>
<dbReference type="PROSITE" id="PS01056">
    <property type="entry name" value="DNA_LIGASE_N2"/>
    <property type="match status" value="1"/>
</dbReference>
<evidence type="ECO:0000255" key="1">
    <source>
        <dbReference type="HAMAP-Rule" id="MF_01588"/>
    </source>
</evidence>
<proteinExistence type="inferred from homology"/>
<name>DNLJ_CYAP4</name>
<feature type="chain" id="PRO_0000380354" description="DNA ligase">
    <location>
        <begin position="1"/>
        <end position="738"/>
    </location>
</feature>
<feature type="domain" description="BRCT" evidence="1">
    <location>
        <begin position="659"/>
        <end position="738"/>
    </location>
</feature>
<feature type="active site" description="N6-AMP-lysine intermediate" evidence="1">
    <location>
        <position position="138"/>
    </location>
</feature>
<feature type="binding site" evidence="1">
    <location>
        <begin position="48"/>
        <end position="52"/>
    </location>
    <ligand>
        <name>NAD(+)</name>
        <dbReference type="ChEBI" id="CHEBI:57540"/>
    </ligand>
</feature>
<feature type="binding site" evidence="1">
    <location>
        <begin position="97"/>
        <end position="98"/>
    </location>
    <ligand>
        <name>NAD(+)</name>
        <dbReference type="ChEBI" id="CHEBI:57540"/>
    </ligand>
</feature>
<feature type="binding site" evidence="1">
    <location>
        <position position="136"/>
    </location>
    <ligand>
        <name>NAD(+)</name>
        <dbReference type="ChEBI" id="CHEBI:57540"/>
    </ligand>
</feature>
<feature type="binding site" evidence="1">
    <location>
        <position position="159"/>
    </location>
    <ligand>
        <name>NAD(+)</name>
        <dbReference type="ChEBI" id="CHEBI:57540"/>
    </ligand>
</feature>
<feature type="binding site" evidence="1">
    <location>
        <position position="196"/>
    </location>
    <ligand>
        <name>NAD(+)</name>
        <dbReference type="ChEBI" id="CHEBI:57540"/>
    </ligand>
</feature>
<feature type="binding site" evidence="1">
    <location>
        <position position="356"/>
    </location>
    <ligand>
        <name>NAD(+)</name>
        <dbReference type="ChEBI" id="CHEBI:57540"/>
    </ligand>
</feature>
<feature type="binding site" evidence="1">
    <location>
        <position position="380"/>
    </location>
    <ligand>
        <name>NAD(+)</name>
        <dbReference type="ChEBI" id="CHEBI:57540"/>
    </ligand>
</feature>
<feature type="binding site" evidence="1">
    <location>
        <position position="474"/>
    </location>
    <ligand>
        <name>Zn(2+)</name>
        <dbReference type="ChEBI" id="CHEBI:29105"/>
    </ligand>
</feature>
<feature type="binding site" evidence="1">
    <location>
        <position position="477"/>
    </location>
    <ligand>
        <name>Zn(2+)</name>
        <dbReference type="ChEBI" id="CHEBI:29105"/>
    </ligand>
</feature>
<feature type="binding site" evidence="1">
    <location>
        <position position="492"/>
    </location>
    <ligand>
        <name>Zn(2+)</name>
        <dbReference type="ChEBI" id="CHEBI:29105"/>
    </ligand>
</feature>
<feature type="binding site" evidence="1">
    <location>
        <position position="497"/>
    </location>
    <ligand>
        <name>Zn(2+)</name>
        <dbReference type="ChEBI" id="CHEBI:29105"/>
    </ligand>
</feature>
<gene>
    <name evidence="1" type="primary">ligA</name>
    <name type="ordered locus">Cyan7425_0676</name>
</gene>
<accession>B8HV17</accession>
<keyword id="KW-0227">DNA damage</keyword>
<keyword id="KW-0234">DNA repair</keyword>
<keyword id="KW-0235">DNA replication</keyword>
<keyword id="KW-0436">Ligase</keyword>
<keyword id="KW-0460">Magnesium</keyword>
<keyword id="KW-0464">Manganese</keyword>
<keyword id="KW-0479">Metal-binding</keyword>
<keyword id="KW-0520">NAD</keyword>
<keyword id="KW-0862">Zinc</keyword>
<protein>
    <recommendedName>
        <fullName evidence="1">DNA ligase</fullName>
        <ecNumber evidence="1">6.5.1.2</ecNumber>
    </recommendedName>
    <alternativeName>
        <fullName evidence="1">Polydeoxyribonucleotide synthase [NAD(+)]</fullName>
    </alternativeName>
</protein>
<comment type="function">
    <text evidence="1">DNA ligase that catalyzes the formation of phosphodiester linkages between 5'-phosphoryl and 3'-hydroxyl groups in double-stranded DNA using NAD as a coenzyme and as the energy source for the reaction. It is essential for DNA replication and repair of damaged DNA.</text>
</comment>
<comment type="catalytic activity">
    <reaction evidence="1">
        <text>NAD(+) + (deoxyribonucleotide)n-3'-hydroxyl + 5'-phospho-(deoxyribonucleotide)m = (deoxyribonucleotide)n+m + AMP + beta-nicotinamide D-nucleotide.</text>
        <dbReference type="EC" id="6.5.1.2"/>
    </reaction>
</comment>
<comment type="cofactor">
    <cofactor evidence="1">
        <name>Mg(2+)</name>
        <dbReference type="ChEBI" id="CHEBI:18420"/>
    </cofactor>
    <cofactor evidence="1">
        <name>Mn(2+)</name>
        <dbReference type="ChEBI" id="CHEBI:29035"/>
    </cofactor>
</comment>
<comment type="similarity">
    <text evidence="1">Belongs to the NAD-dependent DNA ligase family. LigA subfamily.</text>
</comment>